<organism>
    <name type="scientific">Protochlamydia amoebophila (strain UWE25)</name>
    <dbReference type="NCBI Taxonomy" id="264201"/>
    <lineage>
        <taxon>Bacteria</taxon>
        <taxon>Pseudomonadati</taxon>
        <taxon>Chlamydiota</taxon>
        <taxon>Chlamydiia</taxon>
        <taxon>Parachlamydiales</taxon>
        <taxon>Parachlamydiaceae</taxon>
        <taxon>Candidatus Protochlamydia</taxon>
    </lineage>
</organism>
<keyword id="KW-0963">Cytoplasm</keyword>
<keyword id="KW-0378">Hydrolase</keyword>
<keyword id="KW-0479">Metal-binding</keyword>
<keyword id="KW-0547">Nucleotide-binding</keyword>
<keyword id="KW-1185">Reference proteome</keyword>
<protein>
    <recommendedName>
        <fullName evidence="1">5'-nucleotidase SurE</fullName>
        <ecNumber evidence="1">3.1.3.5</ecNumber>
    </recommendedName>
    <alternativeName>
        <fullName evidence="1">Nucleoside 5'-monophosphate phosphohydrolase</fullName>
    </alternativeName>
</protein>
<feature type="chain" id="PRO_0000235631" description="5'-nucleotidase SurE">
    <location>
        <begin position="1"/>
        <end position="261"/>
    </location>
</feature>
<feature type="binding site" evidence="1">
    <location>
        <position position="12"/>
    </location>
    <ligand>
        <name>a divalent metal cation</name>
        <dbReference type="ChEBI" id="CHEBI:60240"/>
    </ligand>
</feature>
<feature type="binding site" evidence="1">
    <location>
        <position position="13"/>
    </location>
    <ligand>
        <name>a divalent metal cation</name>
        <dbReference type="ChEBI" id="CHEBI:60240"/>
    </ligand>
</feature>
<feature type="binding site" evidence="1">
    <location>
        <position position="43"/>
    </location>
    <ligand>
        <name>a divalent metal cation</name>
        <dbReference type="ChEBI" id="CHEBI:60240"/>
    </ligand>
</feature>
<feature type="binding site" evidence="1">
    <location>
        <position position="100"/>
    </location>
    <ligand>
        <name>a divalent metal cation</name>
        <dbReference type="ChEBI" id="CHEBI:60240"/>
    </ligand>
</feature>
<reference key="1">
    <citation type="journal article" date="2004" name="Science">
        <title>Illuminating the evolutionary history of chlamydiae.</title>
        <authorList>
            <person name="Horn M."/>
            <person name="Collingro A."/>
            <person name="Schmitz-Esser S."/>
            <person name="Beier C.L."/>
            <person name="Purkhold U."/>
            <person name="Fartmann B."/>
            <person name="Brandt P."/>
            <person name="Nyakatura G.J."/>
            <person name="Droege M."/>
            <person name="Frishman D."/>
            <person name="Rattei T."/>
            <person name="Mewes H.-W."/>
            <person name="Wagner M."/>
        </authorList>
    </citation>
    <scope>NUCLEOTIDE SEQUENCE [LARGE SCALE GENOMIC DNA]</scope>
    <source>
        <strain>UWE25</strain>
    </source>
</reference>
<comment type="function">
    <text evidence="1">Nucleotidase that shows phosphatase activity on nucleoside 5'-monophosphates.</text>
</comment>
<comment type="catalytic activity">
    <reaction evidence="1">
        <text>a ribonucleoside 5'-phosphate + H2O = a ribonucleoside + phosphate</text>
        <dbReference type="Rhea" id="RHEA:12484"/>
        <dbReference type="ChEBI" id="CHEBI:15377"/>
        <dbReference type="ChEBI" id="CHEBI:18254"/>
        <dbReference type="ChEBI" id="CHEBI:43474"/>
        <dbReference type="ChEBI" id="CHEBI:58043"/>
        <dbReference type="EC" id="3.1.3.5"/>
    </reaction>
</comment>
<comment type="cofactor">
    <cofactor evidence="1">
        <name>a divalent metal cation</name>
        <dbReference type="ChEBI" id="CHEBI:60240"/>
    </cofactor>
    <text evidence="1">Binds 1 divalent metal cation per subunit.</text>
</comment>
<comment type="subcellular location">
    <subcellularLocation>
        <location evidence="1">Cytoplasm</location>
    </subcellularLocation>
</comment>
<comment type="similarity">
    <text evidence="1">Belongs to the SurE nucleotidase family.</text>
</comment>
<accession>Q6MCW1</accession>
<dbReference type="EC" id="3.1.3.5" evidence="1"/>
<dbReference type="EMBL" id="BX908798">
    <property type="protein sequence ID" value="CAF23588.1"/>
    <property type="molecule type" value="Genomic_DNA"/>
</dbReference>
<dbReference type="RefSeq" id="WP_011175414.1">
    <property type="nucleotide sequence ID" value="NC_005861.2"/>
</dbReference>
<dbReference type="SMR" id="Q6MCW1"/>
<dbReference type="STRING" id="264201.pc0864"/>
<dbReference type="eggNOG" id="COG0496">
    <property type="taxonomic scope" value="Bacteria"/>
</dbReference>
<dbReference type="HOGENOM" id="CLU_045192_1_3_0"/>
<dbReference type="Proteomes" id="UP000000529">
    <property type="component" value="Chromosome"/>
</dbReference>
<dbReference type="GO" id="GO:0005737">
    <property type="term" value="C:cytoplasm"/>
    <property type="evidence" value="ECO:0007669"/>
    <property type="project" value="UniProtKB-SubCell"/>
</dbReference>
<dbReference type="GO" id="GO:0008254">
    <property type="term" value="F:3'-nucleotidase activity"/>
    <property type="evidence" value="ECO:0007669"/>
    <property type="project" value="TreeGrafter"/>
</dbReference>
<dbReference type="GO" id="GO:0008253">
    <property type="term" value="F:5'-nucleotidase activity"/>
    <property type="evidence" value="ECO:0007669"/>
    <property type="project" value="UniProtKB-UniRule"/>
</dbReference>
<dbReference type="GO" id="GO:0004309">
    <property type="term" value="F:exopolyphosphatase activity"/>
    <property type="evidence" value="ECO:0007669"/>
    <property type="project" value="TreeGrafter"/>
</dbReference>
<dbReference type="GO" id="GO:0046872">
    <property type="term" value="F:metal ion binding"/>
    <property type="evidence" value="ECO:0007669"/>
    <property type="project" value="UniProtKB-UniRule"/>
</dbReference>
<dbReference type="GO" id="GO:0000166">
    <property type="term" value="F:nucleotide binding"/>
    <property type="evidence" value="ECO:0007669"/>
    <property type="project" value="UniProtKB-KW"/>
</dbReference>
<dbReference type="Gene3D" id="3.40.1210.10">
    <property type="entry name" value="Survival protein SurE-like phosphatase/nucleotidase"/>
    <property type="match status" value="1"/>
</dbReference>
<dbReference type="HAMAP" id="MF_00060">
    <property type="entry name" value="SurE"/>
    <property type="match status" value="1"/>
</dbReference>
<dbReference type="InterPro" id="IPR030048">
    <property type="entry name" value="SurE"/>
</dbReference>
<dbReference type="InterPro" id="IPR002828">
    <property type="entry name" value="SurE-like_Pase/nucleotidase"/>
</dbReference>
<dbReference type="InterPro" id="IPR036523">
    <property type="entry name" value="SurE-like_sf"/>
</dbReference>
<dbReference type="NCBIfam" id="NF001490">
    <property type="entry name" value="PRK00346.1-4"/>
    <property type="match status" value="1"/>
</dbReference>
<dbReference type="NCBIfam" id="TIGR00087">
    <property type="entry name" value="surE"/>
    <property type="match status" value="1"/>
</dbReference>
<dbReference type="PANTHER" id="PTHR30457">
    <property type="entry name" value="5'-NUCLEOTIDASE SURE"/>
    <property type="match status" value="1"/>
</dbReference>
<dbReference type="PANTHER" id="PTHR30457:SF12">
    <property type="entry name" value="5'_3'-NUCLEOTIDASE SURE"/>
    <property type="match status" value="1"/>
</dbReference>
<dbReference type="Pfam" id="PF01975">
    <property type="entry name" value="SurE"/>
    <property type="match status" value="1"/>
</dbReference>
<dbReference type="SUPFAM" id="SSF64167">
    <property type="entry name" value="SurE-like"/>
    <property type="match status" value="1"/>
</dbReference>
<sequence>MSSKPLILVTNDDGVHAKGIRHLWQSIQDLADLIIVAPQQEQSAVSLSITVRRPLHIEKVDWLNAQADVWSVNGTPADCVKLALNVVLPKRPQLIVSGINRGTNAGRNIFYSGTVAAIMEGVMQGIPGIAFSYGDYFNPSYHLIESFIPGIVNYALQNAMQEGTFLNVNFPKTEHGPIKGIRLTTQGKEYWAENPEKRQHPAEQNSYYWLGSKLAEYDEREDSDIFLLRKGFATVVPLHIGDLTNHSHLLKEKLAFETFVN</sequence>
<proteinExistence type="inferred from homology"/>
<gene>
    <name evidence="1" type="primary">surE</name>
    <name type="ordered locus">pc0864</name>
</gene>
<evidence type="ECO:0000255" key="1">
    <source>
        <dbReference type="HAMAP-Rule" id="MF_00060"/>
    </source>
</evidence>
<name>SURE_PARUW</name>